<evidence type="ECO:0000250" key="1"/>
<evidence type="ECO:0000250" key="2">
    <source>
        <dbReference type="UniProtKB" id="P00157"/>
    </source>
</evidence>
<evidence type="ECO:0000255" key="3">
    <source>
        <dbReference type="PROSITE-ProRule" id="PRU00967"/>
    </source>
</evidence>
<evidence type="ECO:0000255" key="4">
    <source>
        <dbReference type="PROSITE-ProRule" id="PRU00968"/>
    </source>
</evidence>
<proteinExistence type="inferred from homology"/>
<gene>
    <name type="primary">MT-CYB</name>
    <name type="synonym">COB</name>
    <name type="synonym">CYTB</name>
    <name type="synonym">MTCYB</name>
</gene>
<sequence>MPHQQMLILFGLLPVATNISTWWNFGSMLLACSSMQVLTGFFLAVHYTANINLAFSSIVHITRDVPYGWMMQNLHAIGASMFFICIYIHIARGLYYGSYLNKKTWLSGTTLLIMLMVTAFFGXXXXXXXXXXXXXXXXXXXXXXXXXXXXXXXXXXXXXXXXXXXXXXXXXXXXXXXXXXXXXXXXXXXXXXXXXXXXXXXXXNSDIDKIPFHPYHTYKDLLMLSLMVLMLLMTVSFLPDIFNDPENFSKANPLVTPQHIKPEWYFLFAYGILRSIPNKLGGALALAMSIMILLTVPFTHTSTIRSMMFRPIMQLMFWTLVATFMVITWAATKPVEPPFTMISQIASTIYFLFFIMNPIAGWIENNIMKDN</sequence>
<protein>
    <recommendedName>
        <fullName>Cytochrome b</fullName>
    </recommendedName>
    <alternativeName>
        <fullName>Complex III subunit 3</fullName>
    </alternativeName>
    <alternativeName>
        <fullName>Complex III subunit III</fullName>
    </alternativeName>
    <alternativeName>
        <fullName>Cytochrome b-c1 complex subunit 3</fullName>
    </alternativeName>
    <alternativeName>
        <fullName>Ubiquinol-cytochrome-c reductase complex cytochrome b subunit</fullName>
    </alternativeName>
</protein>
<comment type="function">
    <text evidence="2">Component of the ubiquinol-cytochrome c reductase complex (complex III or cytochrome b-c1 complex) that is part of the mitochondrial respiratory chain. The b-c1 complex mediates electron transfer from ubiquinol to cytochrome c. Contributes to the generation of a proton gradient across the mitochondrial membrane that is then used for ATP synthesis.</text>
</comment>
<comment type="cofactor">
    <cofactor evidence="2">
        <name>heme b</name>
        <dbReference type="ChEBI" id="CHEBI:60344"/>
    </cofactor>
    <text evidence="2">Binds 2 heme b groups non-covalently.</text>
</comment>
<comment type="subunit">
    <text evidence="2">The cytochrome bc1 complex contains 3 respiratory subunits (MT-CYB, CYC1 and UQCRFS1), 2 core proteins (UQCRC1 and UQCRC2) and probably 6 low-molecular weight proteins.</text>
</comment>
<comment type="subcellular location">
    <subcellularLocation>
        <location evidence="2">Mitochondrion inner membrane</location>
        <topology evidence="2">Multi-pass membrane protein</topology>
    </subcellularLocation>
</comment>
<comment type="miscellaneous">
    <text evidence="1">Heme 1 (or BL or b562) is low-potential and absorbs at about 562 nm, and heme 2 (or BH or b566) is high-potential and absorbs at about 566 nm.</text>
</comment>
<comment type="similarity">
    <text evidence="3 4">Belongs to the cytochrome b family.</text>
</comment>
<comment type="caution">
    <text evidence="2">The full-length protein contains only eight transmembrane helices, not nine as predicted by bioinformatics tools.</text>
</comment>
<feature type="chain" id="PRO_0000060948" description="Cytochrome b">
    <location>
        <begin position="1"/>
        <end position="371"/>
    </location>
</feature>
<feature type="transmembrane region" description="Helical" evidence="2">
    <location>
        <begin position="25"/>
        <end position="45"/>
    </location>
</feature>
<feature type="transmembrane region" description="Helical" evidence="2">
    <location>
        <begin position="69"/>
        <end position="90"/>
    </location>
</feature>
<feature type="transmembrane region" description="Helical" evidence="2">
    <location>
        <begin position="105"/>
        <end position="125"/>
    </location>
</feature>
<feature type="transmembrane region" description="Helical" evidence="2">
    <location>
        <begin position="170"/>
        <end position="190"/>
    </location>
</feature>
<feature type="transmembrane region" description="Helical" evidence="2">
    <location>
        <begin position="218"/>
        <end position="238"/>
    </location>
</feature>
<feature type="transmembrane region" description="Helical" evidence="2">
    <location>
        <begin position="280"/>
        <end position="300"/>
    </location>
</feature>
<feature type="transmembrane region" description="Helical" evidence="2">
    <location>
        <begin position="312"/>
        <end position="332"/>
    </location>
</feature>
<feature type="transmembrane region" description="Helical" evidence="2">
    <location>
        <begin position="339"/>
        <end position="358"/>
    </location>
</feature>
<feature type="binding site" description="axial binding residue" evidence="2">
    <location>
        <position position="75"/>
    </location>
    <ligand>
        <name>heme b</name>
        <dbReference type="ChEBI" id="CHEBI:60344"/>
        <label>b562</label>
    </ligand>
    <ligandPart>
        <name>Fe</name>
        <dbReference type="ChEBI" id="CHEBI:18248"/>
    </ligandPart>
</feature>
<feature type="binding site" description="axial binding residue" evidence="2">
    <location>
        <position position="89"/>
    </location>
    <ligand>
        <name>heme b</name>
        <dbReference type="ChEBI" id="CHEBI:60344"/>
        <label>b566</label>
    </ligand>
    <ligandPart>
        <name>Fe</name>
        <dbReference type="ChEBI" id="CHEBI:18248"/>
    </ligandPart>
</feature>
<feature type="binding site" description="axial binding residue" evidence="2">
    <location>
        <position position="174"/>
    </location>
    <ligand>
        <name>heme b</name>
        <dbReference type="ChEBI" id="CHEBI:60344"/>
        <label>b562</label>
    </ligand>
    <ligandPart>
        <name>Fe</name>
        <dbReference type="ChEBI" id="CHEBI:18248"/>
    </ligandPart>
</feature>
<feature type="binding site" description="axial binding residue" evidence="2">
    <location>
        <position position="188"/>
    </location>
    <ligand>
        <name>heme b</name>
        <dbReference type="ChEBI" id="CHEBI:60344"/>
        <label>b566</label>
    </ligand>
    <ligandPart>
        <name>Fe</name>
        <dbReference type="ChEBI" id="CHEBI:18248"/>
    </ligandPart>
</feature>
<dbReference type="EMBL" id="U69830">
    <property type="protein sequence ID" value="AAC01864.1"/>
    <property type="molecule type" value="Genomic_DNA"/>
</dbReference>
<dbReference type="GO" id="GO:0005743">
    <property type="term" value="C:mitochondrial inner membrane"/>
    <property type="evidence" value="ECO:0007669"/>
    <property type="project" value="UniProtKB-SubCell"/>
</dbReference>
<dbReference type="GO" id="GO:0046872">
    <property type="term" value="F:metal ion binding"/>
    <property type="evidence" value="ECO:0007669"/>
    <property type="project" value="UniProtKB-KW"/>
</dbReference>
<dbReference type="GO" id="GO:0008121">
    <property type="term" value="F:ubiquinol-cytochrome-c reductase activity"/>
    <property type="evidence" value="ECO:0007669"/>
    <property type="project" value="TreeGrafter"/>
</dbReference>
<dbReference type="GO" id="GO:0006122">
    <property type="term" value="P:mitochondrial electron transport, ubiquinol to cytochrome c"/>
    <property type="evidence" value="ECO:0007669"/>
    <property type="project" value="TreeGrafter"/>
</dbReference>
<dbReference type="CDD" id="cd00290">
    <property type="entry name" value="cytochrome_b_C"/>
    <property type="match status" value="1"/>
</dbReference>
<dbReference type="Gene3D" id="1.20.810.10">
    <property type="entry name" value="Cytochrome Bc1 Complex, Chain C"/>
    <property type="match status" value="2"/>
</dbReference>
<dbReference type="InterPro" id="IPR005798">
    <property type="entry name" value="Cyt_b/b6_C"/>
</dbReference>
<dbReference type="InterPro" id="IPR036150">
    <property type="entry name" value="Cyt_b/b6_C_sf"/>
</dbReference>
<dbReference type="InterPro" id="IPR005797">
    <property type="entry name" value="Cyt_b/b6_N"/>
</dbReference>
<dbReference type="InterPro" id="IPR027387">
    <property type="entry name" value="Cytb/b6-like_sf"/>
</dbReference>
<dbReference type="InterPro" id="IPR048260">
    <property type="entry name" value="Cytochrome_b_C_euk/bac"/>
</dbReference>
<dbReference type="InterPro" id="IPR016174">
    <property type="entry name" value="Di-haem_cyt_TM"/>
</dbReference>
<dbReference type="PANTHER" id="PTHR19271">
    <property type="entry name" value="CYTOCHROME B"/>
    <property type="match status" value="1"/>
</dbReference>
<dbReference type="PANTHER" id="PTHR19271:SF16">
    <property type="entry name" value="CYTOCHROME B"/>
    <property type="match status" value="1"/>
</dbReference>
<dbReference type="Pfam" id="PF00032">
    <property type="entry name" value="Cytochrom_B_C"/>
    <property type="match status" value="1"/>
</dbReference>
<dbReference type="Pfam" id="PF00033">
    <property type="entry name" value="Cytochrome_B"/>
    <property type="match status" value="1"/>
</dbReference>
<dbReference type="SUPFAM" id="SSF81648">
    <property type="entry name" value="a domain/subunit of cytochrome bc1 complex (Ubiquinol-cytochrome c reductase)"/>
    <property type="match status" value="1"/>
</dbReference>
<dbReference type="SUPFAM" id="SSF81342">
    <property type="entry name" value="Transmembrane di-heme cytochromes"/>
    <property type="match status" value="1"/>
</dbReference>
<dbReference type="PROSITE" id="PS51003">
    <property type="entry name" value="CYTB_CTER"/>
    <property type="match status" value="1"/>
</dbReference>
<dbReference type="PROSITE" id="PS51002">
    <property type="entry name" value="CYTB_NTER"/>
    <property type="match status" value="1"/>
</dbReference>
<name>CYB_ERYTA</name>
<geneLocation type="mitochondrion"/>
<organism>
    <name type="scientific">Eryx tataricus</name>
    <name type="common">Tartar sand boa</name>
    <dbReference type="NCBI Taxonomy" id="51873"/>
    <lineage>
        <taxon>Eukaryota</taxon>
        <taxon>Metazoa</taxon>
        <taxon>Chordata</taxon>
        <taxon>Craniata</taxon>
        <taxon>Vertebrata</taxon>
        <taxon>Euteleostomi</taxon>
        <taxon>Lepidosauria</taxon>
        <taxon>Squamata</taxon>
        <taxon>Bifurcata</taxon>
        <taxon>Unidentata</taxon>
        <taxon>Episquamata</taxon>
        <taxon>Toxicofera</taxon>
        <taxon>Serpentes</taxon>
        <taxon>Henophidia</taxon>
        <taxon>Boidae</taxon>
        <taxon>Erycinae</taxon>
        <taxon>Eryx</taxon>
    </lineage>
</organism>
<accession>O48085</accession>
<keyword id="KW-0249">Electron transport</keyword>
<keyword id="KW-0349">Heme</keyword>
<keyword id="KW-0408">Iron</keyword>
<keyword id="KW-0472">Membrane</keyword>
<keyword id="KW-0479">Metal-binding</keyword>
<keyword id="KW-0496">Mitochondrion</keyword>
<keyword id="KW-0999">Mitochondrion inner membrane</keyword>
<keyword id="KW-0679">Respiratory chain</keyword>
<keyword id="KW-0812">Transmembrane</keyword>
<keyword id="KW-1133">Transmembrane helix</keyword>
<keyword id="KW-0813">Transport</keyword>
<keyword id="KW-0830">Ubiquinone</keyword>
<reference key="1">
    <citation type="thesis" date="1997" institute="Queen's University / Kingston" country="Canada">
        <title>Hic Sunt Serpentes -- molecular phylogenetics and the Boidae (Serpentes: Booidea).</title>
        <authorList>
            <person name="Campbell B.N."/>
        </authorList>
    </citation>
    <scope>NUCLEOTIDE SEQUENCE [GENOMIC DNA]</scope>
</reference>